<gene>
    <name evidence="1" type="primary">nudI</name>
    <name type="ordered locus">ECED1_2717</name>
</gene>
<name>NUDI_ECO81</name>
<sequence length="141" mass="16357">MRQRTIVCPLIQNDGAYLLCKMADDRGVFPGQWALSGGGVEPGERIEEALRREIREELGEQLLLTEITPWTFSDDIRTKTYADGRKEEIYMIYLIFDCVSANRDVKINEEFQDYAWVKPEDLVHYDLNVATRKTLRLKGLL</sequence>
<comment type="function">
    <text evidence="1">Catalyzes the hydrolysis of nucleoside triphosphates, with a preference for pyrimidine deoxynucleoside triphosphates (dUTP, dTTP and dCTP).</text>
</comment>
<comment type="catalytic activity">
    <reaction evidence="1">
        <text>a ribonucleoside 5'-triphosphate + H2O = a ribonucleoside 5'-phosphate + diphosphate + H(+)</text>
        <dbReference type="Rhea" id="RHEA:23996"/>
        <dbReference type="ChEBI" id="CHEBI:15377"/>
        <dbReference type="ChEBI" id="CHEBI:15378"/>
        <dbReference type="ChEBI" id="CHEBI:33019"/>
        <dbReference type="ChEBI" id="CHEBI:58043"/>
        <dbReference type="ChEBI" id="CHEBI:61557"/>
        <dbReference type="EC" id="3.6.1.9"/>
    </reaction>
</comment>
<comment type="catalytic activity">
    <reaction evidence="1">
        <text>a 2'-deoxyribonucleoside 5'-triphosphate + H2O = a 2'-deoxyribonucleoside 5'-phosphate + diphosphate + H(+)</text>
        <dbReference type="Rhea" id="RHEA:44644"/>
        <dbReference type="ChEBI" id="CHEBI:15377"/>
        <dbReference type="ChEBI" id="CHEBI:15378"/>
        <dbReference type="ChEBI" id="CHEBI:33019"/>
        <dbReference type="ChEBI" id="CHEBI:61560"/>
        <dbReference type="ChEBI" id="CHEBI:65317"/>
        <dbReference type="EC" id="3.6.1.9"/>
    </reaction>
</comment>
<comment type="catalytic activity">
    <reaction evidence="1">
        <text>dUTP + H2O = dUMP + diphosphate + H(+)</text>
        <dbReference type="Rhea" id="RHEA:10248"/>
        <dbReference type="ChEBI" id="CHEBI:15377"/>
        <dbReference type="ChEBI" id="CHEBI:15378"/>
        <dbReference type="ChEBI" id="CHEBI:33019"/>
        <dbReference type="ChEBI" id="CHEBI:61555"/>
        <dbReference type="ChEBI" id="CHEBI:246422"/>
        <dbReference type="EC" id="3.6.1.9"/>
    </reaction>
</comment>
<comment type="catalytic activity">
    <reaction evidence="1">
        <text>dUTP + H2O = dUMP + diphosphate + H(+)</text>
        <dbReference type="Rhea" id="RHEA:10248"/>
        <dbReference type="ChEBI" id="CHEBI:15377"/>
        <dbReference type="ChEBI" id="CHEBI:15378"/>
        <dbReference type="ChEBI" id="CHEBI:33019"/>
        <dbReference type="ChEBI" id="CHEBI:61555"/>
        <dbReference type="ChEBI" id="CHEBI:246422"/>
        <dbReference type="EC" id="3.6.1.23"/>
    </reaction>
</comment>
<comment type="catalytic activity">
    <reaction evidence="1">
        <text>dTTP + H2O = dTMP + diphosphate + H(+)</text>
        <dbReference type="Rhea" id="RHEA:28534"/>
        <dbReference type="ChEBI" id="CHEBI:15377"/>
        <dbReference type="ChEBI" id="CHEBI:15378"/>
        <dbReference type="ChEBI" id="CHEBI:33019"/>
        <dbReference type="ChEBI" id="CHEBI:37568"/>
        <dbReference type="ChEBI" id="CHEBI:63528"/>
        <dbReference type="EC" id="3.6.1.9"/>
    </reaction>
</comment>
<comment type="catalytic activity">
    <reaction evidence="1">
        <text>dCTP + H2O = dCMP + diphosphate + H(+)</text>
        <dbReference type="Rhea" id="RHEA:22636"/>
        <dbReference type="ChEBI" id="CHEBI:15377"/>
        <dbReference type="ChEBI" id="CHEBI:15378"/>
        <dbReference type="ChEBI" id="CHEBI:33019"/>
        <dbReference type="ChEBI" id="CHEBI:57566"/>
        <dbReference type="ChEBI" id="CHEBI:61481"/>
        <dbReference type="EC" id="3.6.1.9"/>
    </reaction>
</comment>
<comment type="catalytic activity">
    <reaction evidence="1">
        <text>dCTP + H2O = dCMP + diphosphate + H(+)</text>
        <dbReference type="Rhea" id="RHEA:22636"/>
        <dbReference type="ChEBI" id="CHEBI:15377"/>
        <dbReference type="ChEBI" id="CHEBI:15378"/>
        <dbReference type="ChEBI" id="CHEBI:33019"/>
        <dbReference type="ChEBI" id="CHEBI:57566"/>
        <dbReference type="ChEBI" id="CHEBI:61481"/>
        <dbReference type="EC" id="3.6.1.12"/>
    </reaction>
</comment>
<comment type="cofactor">
    <cofactor evidence="1">
        <name>Mg(2+)</name>
        <dbReference type="ChEBI" id="CHEBI:18420"/>
    </cofactor>
</comment>
<comment type="subunit">
    <text evidence="1">Monomer.</text>
</comment>
<comment type="similarity">
    <text evidence="1">Belongs to the Nudix hydrolase family. NudI subfamily.</text>
</comment>
<organism>
    <name type="scientific">Escherichia coli O81 (strain ED1a)</name>
    <dbReference type="NCBI Taxonomy" id="585397"/>
    <lineage>
        <taxon>Bacteria</taxon>
        <taxon>Pseudomonadati</taxon>
        <taxon>Pseudomonadota</taxon>
        <taxon>Gammaproteobacteria</taxon>
        <taxon>Enterobacterales</taxon>
        <taxon>Enterobacteriaceae</taxon>
        <taxon>Escherichia</taxon>
    </lineage>
</organism>
<feature type="chain" id="PRO_1000188480" description="Nucleoside triphosphatase NudI">
    <location>
        <begin position="1"/>
        <end position="141"/>
    </location>
</feature>
<feature type="domain" description="Nudix hydrolase" evidence="1">
    <location>
        <begin position="1"/>
        <end position="141"/>
    </location>
</feature>
<feature type="short sequence motif" description="Nudix box">
    <location>
        <begin position="38"/>
        <end position="59"/>
    </location>
</feature>
<accession>B7MXT2</accession>
<keyword id="KW-0378">Hydrolase</keyword>
<keyword id="KW-0460">Magnesium</keyword>
<evidence type="ECO:0000255" key="1">
    <source>
        <dbReference type="HAMAP-Rule" id="MF_01846"/>
    </source>
</evidence>
<reference key="1">
    <citation type="journal article" date="2009" name="PLoS Genet.">
        <title>Organised genome dynamics in the Escherichia coli species results in highly diverse adaptive paths.</title>
        <authorList>
            <person name="Touchon M."/>
            <person name="Hoede C."/>
            <person name="Tenaillon O."/>
            <person name="Barbe V."/>
            <person name="Baeriswyl S."/>
            <person name="Bidet P."/>
            <person name="Bingen E."/>
            <person name="Bonacorsi S."/>
            <person name="Bouchier C."/>
            <person name="Bouvet O."/>
            <person name="Calteau A."/>
            <person name="Chiapello H."/>
            <person name="Clermont O."/>
            <person name="Cruveiller S."/>
            <person name="Danchin A."/>
            <person name="Diard M."/>
            <person name="Dossat C."/>
            <person name="Karoui M.E."/>
            <person name="Frapy E."/>
            <person name="Garry L."/>
            <person name="Ghigo J.M."/>
            <person name="Gilles A.M."/>
            <person name="Johnson J."/>
            <person name="Le Bouguenec C."/>
            <person name="Lescat M."/>
            <person name="Mangenot S."/>
            <person name="Martinez-Jehanne V."/>
            <person name="Matic I."/>
            <person name="Nassif X."/>
            <person name="Oztas S."/>
            <person name="Petit M.A."/>
            <person name="Pichon C."/>
            <person name="Rouy Z."/>
            <person name="Ruf C.S."/>
            <person name="Schneider D."/>
            <person name="Tourret J."/>
            <person name="Vacherie B."/>
            <person name="Vallenet D."/>
            <person name="Medigue C."/>
            <person name="Rocha E.P.C."/>
            <person name="Denamur E."/>
        </authorList>
    </citation>
    <scope>NUCLEOTIDE SEQUENCE [LARGE SCALE GENOMIC DNA]</scope>
    <source>
        <strain>ED1a</strain>
    </source>
</reference>
<proteinExistence type="inferred from homology"/>
<protein>
    <recommendedName>
        <fullName evidence="1">Nucleoside triphosphatase NudI</fullName>
        <ecNumber evidence="1">3.6.1.9</ecNumber>
    </recommendedName>
    <alternativeName>
        <fullName evidence="1">Nucleotide diphosphatase NudI</fullName>
    </alternativeName>
    <alternativeName>
        <fullName evidence="1">Pyrimidine deoxynucleoside triphosphate diphosphatase</fullName>
    </alternativeName>
    <alternativeName>
        <fullName evidence="1">dCTP diphosphatase</fullName>
        <ecNumber evidence="1">3.6.1.12</ecNumber>
    </alternativeName>
    <alternativeName>
        <fullName evidence="1">dTTP diphosphatase</fullName>
        <ecNumber evidence="1">3.6.1.-</ecNumber>
    </alternativeName>
    <alternativeName>
        <fullName evidence="1">dUTP diphosphatase</fullName>
        <ecNumber evidence="1">3.6.1.23</ecNumber>
    </alternativeName>
</protein>
<dbReference type="EC" id="3.6.1.9" evidence="1"/>
<dbReference type="EC" id="3.6.1.12" evidence="1"/>
<dbReference type="EC" id="3.6.1.-" evidence="1"/>
<dbReference type="EC" id="3.6.1.23" evidence="1"/>
<dbReference type="EMBL" id="CU928162">
    <property type="protein sequence ID" value="CAR08898.2"/>
    <property type="molecule type" value="Genomic_DNA"/>
</dbReference>
<dbReference type="RefSeq" id="WP_001249883.1">
    <property type="nucleotide sequence ID" value="NC_011745.1"/>
</dbReference>
<dbReference type="SMR" id="B7MXT2"/>
<dbReference type="KEGG" id="ecq:ECED1_2717"/>
<dbReference type="HOGENOM" id="CLU_037162_31_0_6"/>
<dbReference type="Proteomes" id="UP000000748">
    <property type="component" value="Chromosome"/>
</dbReference>
<dbReference type="GO" id="GO:0047840">
    <property type="term" value="F:dCTP diphosphatase activity"/>
    <property type="evidence" value="ECO:0007669"/>
    <property type="project" value="UniProtKB-EC"/>
</dbReference>
<dbReference type="GO" id="GO:0036218">
    <property type="term" value="F:dTTP diphosphatase activity"/>
    <property type="evidence" value="ECO:0007669"/>
    <property type="project" value="RHEA"/>
</dbReference>
<dbReference type="GO" id="GO:0004170">
    <property type="term" value="F:dUTP diphosphatase activity"/>
    <property type="evidence" value="ECO:0007669"/>
    <property type="project" value="UniProtKB-EC"/>
</dbReference>
<dbReference type="GO" id="GO:0000287">
    <property type="term" value="F:magnesium ion binding"/>
    <property type="evidence" value="ECO:0007669"/>
    <property type="project" value="UniProtKB-UniRule"/>
</dbReference>
<dbReference type="FunFam" id="3.90.79.10:FF:000039">
    <property type="entry name" value="Nucleoside triphosphatase NudI"/>
    <property type="match status" value="1"/>
</dbReference>
<dbReference type="Gene3D" id="3.90.79.10">
    <property type="entry name" value="Nucleoside Triphosphate Pyrophosphohydrolase"/>
    <property type="match status" value="1"/>
</dbReference>
<dbReference type="HAMAP" id="MF_01846">
    <property type="entry name" value="Nudix_NudI"/>
    <property type="match status" value="1"/>
</dbReference>
<dbReference type="InterPro" id="IPR023781">
    <property type="entry name" value="Nucleoside_triphosphatase_NudI"/>
</dbReference>
<dbReference type="InterPro" id="IPR020476">
    <property type="entry name" value="Nudix_hydrolase"/>
</dbReference>
<dbReference type="InterPro" id="IPR015797">
    <property type="entry name" value="NUDIX_hydrolase-like_dom_sf"/>
</dbReference>
<dbReference type="InterPro" id="IPR020084">
    <property type="entry name" value="NUDIX_hydrolase_CS"/>
</dbReference>
<dbReference type="InterPro" id="IPR000086">
    <property type="entry name" value="NUDIX_hydrolase_dom"/>
</dbReference>
<dbReference type="NCBIfam" id="NF012016">
    <property type="entry name" value="PRK15472.1"/>
    <property type="match status" value="1"/>
</dbReference>
<dbReference type="PANTHER" id="PTHR43046">
    <property type="entry name" value="GDP-MANNOSE MANNOSYL HYDROLASE"/>
    <property type="match status" value="1"/>
</dbReference>
<dbReference type="PANTHER" id="PTHR43046:SF14">
    <property type="entry name" value="MUTT_NUDIX FAMILY PROTEIN"/>
    <property type="match status" value="1"/>
</dbReference>
<dbReference type="Pfam" id="PF00293">
    <property type="entry name" value="NUDIX"/>
    <property type="match status" value="1"/>
</dbReference>
<dbReference type="PRINTS" id="PR00502">
    <property type="entry name" value="NUDIXFAMILY"/>
</dbReference>
<dbReference type="SUPFAM" id="SSF55811">
    <property type="entry name" value="Nudix"/>
    <property type="match status" value="1"/>
</dbReference>
<dbReference type="PROSITE" id="PS51462">
    <property type="entry name" value="NUDIX"/>
    <property type="match status" value="1"/>
</dbReference>
<dbReference type="PROSITE" id="PS00893">
    <property type="entry name" value="NUDIX_BOX"/>
    <property type="match status" value="1"/>
</dbReference>